<reference key="1">
    <citation type="journal article" date="1993" name="J. Virol.">
        <title>Analysis of the evolution and variation of the human influenza A virus nucleoprotein gene from 1933 to 1990.</title>
        <authorList>
            <person name="Shu L.L."/>
            <person name="Bean W.J."/>
            <person name="Webster R.G."/>
        </authorList>
    </citation>
    <scope>NUCLEOTIDE SEQUENCE [GENOMIC RNA]</scope>
</reference>
<protein>
    <recommendedName>
        <fullName evidence="1">Nucleoprotein</fullName>
    </recommendedName>
    <alternativeName>
        <fullName evidence="1">Nucleocapsid protein</fullName>
        <shortName evidence="1">Protein N</shortName>
    </alternativeName>
</protein>
<organism>
    <name type="scientific">Influenza A virus (strain A/Guangdong/39/1989 H3N2)</name>
    <dbReference type="NCBI Taxonomy" id="382812"/>
    <lineage>
        <taxon>Viruses</taxon>
        <taxon>Riboviria</taxon>
        <taxon>Orthornavirae</taxon>
        <taxon>Negarnaviricota</taxon>
        <taxon>Polyploviricotina</taxon>
        <taxon>Insthoviricetes</taxon>
        <taxon>Articulavirales</taxon>
        <taxon>Orthomyxoviridae</taxon>
        <taxon>Alphainfluenzavirus</taxon>
        <taxon>Alphainfluenzavirus influenzae</taxon>
        <taxon>Influenza A virus</taxon>
    </lineage>
</organism>
<accession>P69292</accession>
<accession>Q07539</accession>
<accession>Q08029</accession>
<organismHost>
    <name type="scientific">Aves</name>
    <dbReference type="NCBI Taxonomy" id="8782"/>
</organismHost>
<organismHost>
    <name type="scientific">Homo sapiens</name>
    <name type="common">Human</name>
    <dbReference type="NCBI Taxonomy" id="9606"/>
</organismHost>
<organismHost>
    <name type="scientific">Mysticeti</name>
    <name type="common">baleen whales</name>
    <dbReference type="NCBI Taxonomy" id="9761"/>
</organismHost>
<organismHost>
    <name type="scientific">Phocidae</name>
    <name type="common">true seals</name>
    <dbReference type="NCBI Taxonomy" id="9709"/>
</organismHost>
<organismHost>
    <name type="scientific">Sus scrofa</name>
    <name type="common">Pig</name>
    <dbReference type="NCBI Taxonomy" id="9823"/>
</organismHost>
<sequence>MASQGTKRSYEQMETDGERQNATEIRASVGKMIDGIGRFYIQMCTELKLSDYEGRLIQNSLTVERMVLSAFDERRNRYLEEHPSAGKDPKKTGGPIYKRVGGRWMRELVLYDKEEIRRIWRQANNGDDATRGLTHMMIWHSNLNDTTYQRTRALVRTGMDPRMCSLMQGSTLPRRSGAAGAAVKGIGTMVMELIRMIKRGINDRNFWRGENGRKTRSAYERMCNILKGKFQTAAQRAMMDQVRESRNPGNAEIEDLIFSARSALILRGSVAHKSCLPACVYGPAVSSGYDFEKEGYSLVGIDPFKLLQNSQVYSLIRPNENPAHKSQLVWMACHSAAFEDLRLLSFIRGTKVSPRGKLSTRGVQIASNENMDNMESSTLELRSRYWAIRTRSGGNTNQQRASAGQISVQPTFSVQRNLPFEKSTVMAAFTGNTEGRTSDMRAEIIRMMEGAKPEEVSFRGRGVFELSDEKATNPIVPSFDMSNEGSYFFGDNAEEYDN</sequence>
<feature type="chain" id="PRO_0000079049" description="Nucleoprotein">
    <location>
        <begin position="1"/>
        <end position="498"/>
    </location>
</feature>
<feature type="region of interest" description="Disordered" evidence="2">
    <location>
        <begin position="1"/>
        <end position="21"/>
    </location>
</feature>
<feature type="short sequence motif" description="Unconventional nuclear localization signal" evidence="1">
    <location>
        <begin position="1"/>
        <end position="18"/>
    </location>
</feature>
<feature type="short sequence motif" description="Bipartite nuclear localization signal" evidence="1">
    <location>
        <begin position="198"/>
        <end position="216"/>
    </location>
</feature>
<feature type="compositionally biased region" description="Basic and acidic residues" evidence="2">
    <location>
        <begin position="8"/>
        <end position="21"/>
    </location>
</feature>
<dbReference type="EMBL" id="L07373">
    <property type="protein sequence ID" value="AAA51490.1"/>
    <property type="molecule type" value="Genomic_RNA"/>
</dbReference>
<dbReference type="SMR" id="P69292"/>
<dbReference type="GO" id="GO:0019029">
    <property type="term" value="C:helical viral capsid"/>
    <property type="evidence" value="ECO:0007669"/>
    <property type="project" value="UniProtKB-UniRule"/>
</dbReference>
<dbReference type="GO" id="GO:0043657">
    <property type="term" value="C:host cell"/>
    <property type="evidence" value="ECO:0007669"/>
    <property type="project" value="GOC"/>
</dbReference>
<dbReference type="GO" id="GO:0042025">
    <property type="term" value="C:host cell nucleus"/>
    <property type="evidence" value="ECO:0007669"/>
    <property type="project" value="UniProtKB-SubCell"/>
</dbReference>
<dbReference type="GO" id="GO:1990904">
    <property type="term" value="C:ribonucleoprotein complex"/>
    <property type="evidence" value="ECO:0007669"/>
    <property type="project" value="UniProtKB-KW"/>
</dbReference>
<dbReference type="GO" id="GO:0019013">
    <property type="term" value="C:viral nucleocapsid"/>
    <property type="evidence" value="ECO:0007669"/>
    <property type="project" value="UniProtKB-UniRule"/>
</dbReference>
<dbReference type="GO" id="GO:0003723">
    <property type="term" value="F:RNA binding"/>
    <property type="evidence" value="ECO:0007669"/>
    <property type="project" value="UniProtKB-UniRule"/>
</dbReference>
<dbReference type="GO" id="GO:0005198">
    <property type="term" value="F:structural molecule activity"/>
    <property type="evidence" value="ECO:0007669"/>
    <property type="project" value="UniProtKB-UniRule"/>
</dbReference>
<dbReference type="GO" id="GO:0046718">
    <property type="term" value="P:symbiont entry into host cell"/>
    <property type="evidence" value="ECO:0007669"/>
    <property type="project" value="UniProtKB-KW"/>
</dbReference>
<dbReference type="GO" id="GO:0075732">
    <property type="term" value="P:viral penetration into host nucleus"/>
    <property type="evidence" value="ECO:0007669"/>
    <property type="project" value="UniProtKB-UniRule"/>
</dbReference>
<dbReference type="HAMAP" id="MF_04070">
    <property type="entry name" value="INFV_NCAP"/>
    <property type="match status" value="1"/>
</dbReference>
<dbReference type="InterPro" id="IPR002141">
    <property type="entry name" value="Flu_NP"/>
</dbReference>
<dbReference type="Pfam" id="PF00506">
    <property type="entry name" value="Flu_NP"/>
    <property type="match status" value="1"/>
</dbReference>
<dbReference type="SUPFAM" id="SSF161003">
    <property type="entry name" value="flu NP-like"/>
    <property type="match status" value="1"/>
</dbReference>
<comment type="function">
    <text evidence="1">Encapsidates the negative strand viral RNA, protecting it from nucleases. The encapsidated genomic RNA is termed the ribonucleoprotein (RNP) and serves as template for transcription and replication. The RNP needs to be localized in the host nucleus to start an infectious cycle, but is too large to diffuse through the nuclear pore complex. NP comprises at least 2 nuclear localization signals that are responsible for the active RNP import into the nucleus through cellular importin alpha/beta pathway. Later in the infection, nclear export of RNPs are mediated through viral proteins NEP interacting with M1 which binds nucleoproteins. It is possible that nucleoprotein binds directly host exportin-1/XPO1 and plays an active role in RNPs nuclear export. M1 interaction with RNP seems to hide nucleoprotein's nuclear localization signals. Soon after a virion infects a new cell, M1 dissociates from the RNP under acidification of the virion driven by M2 protein. Dissociation of M1 from RNP unmasks nucleoprotein's nuclear localization signals, targeting the RNP to the nucleus.</text>
</comment>
<comment type="subunit">
    <text evidence="1">Homomultimerizes to form the nucleocapsid. May bind host exportin-1/XPO1. Binds to viral genomic RNA. Protein-RNA contacts are mediated by a combination of electrostatic interactions between positively charged residues and the phosphate backbone and planar interactions between aromatic side chains and bases.</text>
</comment>
<comment type="subcellular location">
    <subcellularLocation>
        <location evidence="1">Virion</location>
    </subcellularLocation>
    <subcellularLocation>
        <location evidence="1">Host nucleus</location>
    </subcellularLocation>
</comment>
<comment type="PTM">
    <text evidence="1">Late in virus-infected cells, may be cleaved from a 56-kDa protein to a 53-kDa protein by a cellular caspase. This cleavage might be a marker for the onset of apoptosis in infected cells or have a specific function in virus host interaction.</text>
</comment>
<comment type="similarity">
    <text evidence="1">Belongs to the influenza viruses nucleoprotein family.</text>
</comment>
<keyword id="KW-0167">Capsid protein</keyword>
<keyword id="KW-1139">Helical capsid protein</keyword>
<keyword id="KW-1048">Host nucleus</keyword>
<keyword id="KW-0945">Host-virus interaction</keyword>
<keyword id="KW-0687">Ribonucleoprotein</keyword>
<keyword id="KW-0694">RNA-binding</keyword>
<keyword id="KW-0543">Viral nucleoprotein</keyword>
<keyword id="KW-1163">Viral penetration into host nucleus</keyword>
<keyword id="KW-0946">Virion</keyword>
<keyword id="KW-1160">Virus entry into host cell</keyword>
<gene>
    <name evidence="1" type="primary">NP</name>
</gene>
<name>NCAP_I89A3</name>
<proteinExistence type="inferred from homology"/>
<evidence type="ECO:0000255" key="1">
    <source>
        <dbReference type="HAMAP-Rule" id="MF_04070"/>
    </source>
</evidence>
<evidence type="ECO:0000256" key="2">
    <source>
        <dbReference type="SAM" id="MobiDB-lite"/>
    </source>
</evidence>